<sequence length="619" mass="68374">MRVLVWIAGLAPLAVAVPSSSYRVAVAARADNTSASVAPSQNVSGAAPPELVVYTLPCEDGNSTARTAEIRLKQATLLYGPSLLGNASYFPGGPLGDAISLRDQTVWEGAAVVQSLRAFTDAAKVAANIKQNGGLNSLDDFKVLYQDGWKGSVPQGIARGQSENYTSDLLFSMERLSVNPYILKRLHPTEDALPFQVDRATVKQLTKTSLKALHAAGRLFVADHSYQRNYTRLANRYSAACTALFYLDPRSNQFLPLAIKTNVGADLTYTPLDTDNNNWLLAKIMFNNNDLFHGQIFHVAYPHAIAEIVHLAALRTMSARHPVLALMERLMYQAYAVRPLGERVLFNKGGLFEQNFAYPQDMVYKFVGDSYPTTGRWRAGYLDTDVRARGLVDADYGPELPHFPFYEDGSRLVEVIRRFVRSFVDATYHESDEMVAKDAELQAWVAEANGPAGVEDFEPGPLDTRERLVEVLTHMAWLTGCAHHVLNQGEPVTASGVLPMHPTALYAPVPTSKANTTADLLGYLPSAQKSVDQVTLLARFNRPDVVPTNQTLRYMFAAPQLLLGNGEAYRRANQRFVRAMGRISDEVKARRFDDRGLSQGMPFIWQALDPGNIPFYLSV</sequence>
<evidence type="ECO:0000250" key="1">
    <source>
        <dbReference type="UniProtKB" id="Q8X151"/>
    </source>
</evidence>
<evidence type="ECO:0000255" key="2"/>
<evidence type="ECO:0000255" key="3">
    <source>
        <dbReference type="PROSITE-ProRule" id="PRU00498"/>
    </source>
</evidence>
<evidence type="ECO:0000255" key="4">
    <source>
        <dbReference type="PROSITE-ProRule" id="PRU00726"/>
    </source>
</evidence>
<evidence type="ECO:0000269" key="5">
    <source>
    </source>
</evidence>
<evidence type="ECO:0000269" key="6">
    <source>
    </source>
</evidence>
<evidence type="ECO:0000303" key="7">
    <source>
    </source>
</evidence>
<evidence type="ECO:0000305" key="8"/>
<evidence type="ECO:0007744" key="9">
    <source>
        <dbReference type="PDB" id="5FNO"/>
    </source>
</evidence>
<evidence type="ECO:0007829" key="10">
    <source>
        <dbReference type="PDB" id="5FNO"/>
    </source>
</evidence>
<comment type="function">
    <text evidence="5">Lipoxygenase that metabolizes linoleic and alpha-linolenic acids to 9S-, 11- and 13R-hydroperoxy fatty acids. At the end of lipoxygenation, the intermediate product 11S-HPODE from linoleic acid is then transformed into 9S-HPODE and 13R-HPODE as the final products. The intermediate product 11R-HPOTrE from alpha-linolenic acid is transformed into 9S-HPOTrE and 13R-HPOTrE as the final products. 9S-HPOTrE is further oxidized by the enzyme to 9S,16S-DiHPOTrE as the end product.</text>
</comment>
<comment type="catalytic activity">
    <reaction evidence="5">
        <text>(9Z,12Z)-octadecadienoate + O2 = (9S)-hydroperoxy-(10E,12Z)-octadecadienoate</text>
        <dbReference type="Rhea" id="RHEA:30291"/>
        <dbReference type="ChEBI" id="CHEBI:15379"/>
        <dbReference type="ChEBI" id="CHEBI:30245"/>
        <dbReference type="ChEBI" id="CHEBI:60955"/>
        <dbReference type="EC" id="1.13.11.58"/>
    </reaction>
</comment>
<comment type="catalytic activity">
    <reaction evidence="5">
        <text>(9Z,12Z)-octadecadienoate + O2 = (11S)-hydroperoxy-(9Z,12Z)-octadecadienoate</text>
        <dbReference type="Rhea" id="RHEA:18993"/>
        <dbReference type="ChEBI" id="CHEBI:15379"/>
        <dbReference type="ChEBI" id="CHEBI:30245"/>
        <dbReference type="ChEBI" id="CHEBI:57467"/>
        <dbReference type="EC" id="1.13.11.45"/>
    </reaction>
</comment>
<comment type="catalytic activity">
    <reaction evidence="5">
        <text>(9Z,12Z)-octadecadienoate + O2 = (13R)-hydroperoxy-(9Z,11E)-octadecadienoate</text>
        <dbReference type="Rhea" id="RHEA:51240"/>
        <dbReference type="ChEBI" id="CHEBI:15379"/>
        <dbReference type="ChEBI" id="CHEBI:30245"/>
        <dbReference type="ChEBI" id="CHEBI:133985"/>
    </reaction>
</comment>
<comment type="catalytic activity">
    <reaction evidence="5">
        <text>(9Z,12Z,15Z)-octadecatrienoate + O2 = (9S)-hydroperoxy-(10E,12Z,15Z)-octadecatrienoate</text>
        <dbReference type="Rhea" id="RHEA:51248"/>
        <dbReference type="ChEBI" id="CHEBI:15379"/>
        <dbReference type="ChEBI" id="CHEBI:32387"/>
        <dbReference type="ChEBI" id="CHEBI:60962"/>
    </reaction>
</comment>
<comment type="catalytic activity">
    <reaction evidence="5 6">
        <text>(9Z,12Z,15Z)-octadecatrienoate + O2 = (11R)-hydroperoxy-(9Z,12Z,15Z)-octadecatrienoate</text>
        <dbReference type="Rhea" id="RHEA:51252"/>
        <dbReference type="ChEBI" id="CHEBI:15379"/>
        <dbReference type="ChEBI" id="CHEBI:32387"/>
        <dbReference type="ChEBI" id="CHEBI:133989"/>
    </reaction>
</comment>
<comment type="catalytic activity">
    <reaction evidence="5">
        <text>(9Z,12Z,15Z)-octadecatrienoate + O2 = (13R)-hydroperoxy-(9Z,11E,15Z)-octadecatrienoate</text>
        <dbReference type="Rhea" id="RHEA:51244"/>
        <dbReference type="ChEBI" id="CHEBI:15379"/>
        <dbReference type="ChEBI" id="CHEBI:32387"/>
        <dbReference type="ChEBI" id="CHEBI:133987"/>
    </reaction>
</comment>
<comment type="catalytic activity">
    <reaction evidence="5 6">
        <text>(9S)-hydroperoxy-(10E,12Z,15Z)-octadecatrienoate + O2 = (9S,16S)-dihydroperoxy-(10E,12Z,14E)-octadecatrienoate</text>
        <dbReference type="Rhea" id="RHEA:51256"/>
        <dbReference type="ChEBI" id="CHEBI:15379"/>
        <dbReference type="ChEBI" id="CHEBI:60962"/>
        <dbReference type="ChEBI" id="CHEBI:133991"/>
    </reaction>
</comment>
<comment type="cofactor">
    <cofactor evidence="6">
        <name>Mn(2+)</name>
        <dbReference type="ChEBI" id="CHEBI:29035"/>
    </cofactor>
    <text evidence="1">Three His residues, the carboxyl oxygen of the C-terminal Ile or Val residue, and a fifth residue, usually Asn, ligate the metal, which binds water to form a catalytic base Mn(2+)OH(2) for hydrogen abstraction.</text>
</comment>
<comment type="subcellular location">
    <subcellularLocation>
        <location evidence="1">Secreted</location>
    </subcellularLocation>
</comment>
<comment type="similarity">
    <text evidence="8">Belongs to the lipoxygenase family. Manganese lipoxygenase subfamily.</text>
</comment>
<comment type="sequence caution" evidence="8">
    <conflict type="erroneous gene model prediction">
        <sequence resource="EMBL-CDS" id="EHA49687"/>
    </conflict>
</comment>
<dbReference type="EC" id="1.13.11.-" evidence="5"/>
<dbReference type="EC" id="1.13.11.45" evidence="5"/>
<dbReference type="EC" id="1.13.11.58" evidence="5"/>
<dbReference type="EMBL" id="KT734829">
    <property type="protein sequence ID" value="ALE27899.1"/>
    <property type="molecule type" value="mRNA"/>
</dbReference>
<dbReference type="EMBL" id="AY829440">
    <property type="protein sequence ID" value="AAX48918.1"/>
    <property type="molecule type" value="mRNA"/>
</dbReference>
<dbReference type="EMBL" id="AY858988">
    <property type="protein sequence ID" value="AAX52528.1"/>
    <property type="molecule type" value="Genomic_DNA"/>
</dbReference>
<dbReference type="EMBL" id="CM001234">
    <property type="protein sequence ID" value="EHA49687.1"/>
    <property type="status" value="ALT_SEQ"/>
    <property type="molecule type" value="Genomic_DNA"/>
</dbReference>
<dbReference type="RefSeq" id="XP_003716006.1">
    <property type="nucleotide sequence ID" value="XM_003715958.1"/>
</dbReference>
<dbReference type="PDB" id="5FNO">
    <property type="method" value="X-ray"/>
    <property type="resolution" value="2.04 A"/>
    <property type="chains" value="A/B=17-588"/>
</dbReference>
<dbReference type="PDBsum" id="5FNO"/>
<dbReference type="SMR" id="G4NAP4"/>
<dbReference type="STRING" id="242507.G4NAP4"/>
<dbReference type="SwissLipids" id="SLP:000001658"/>
<dbReference type="iPTMnet" id="G4NAP4"/>
<dbReference type="GeneID" id="2678734"/>
<dbReference type="KEGG" id="mgr:MGG_08499"/>
<dbReference type="eggNOG" id="ENOG502QQSP">
    <property type="taxonomic scope" value="Eukaryota"/>
</dbReference>
<dbReference type="HOGENOM" id="CLU_004282_4_0_1"/>
<dbReference type="InParanoid" id="G4NAP4"/>
<dbReference type="OrthoDB" id="407298at2759"/>
<dbReference type="BRENDA" id="1.13.11.45">
    <property type="organism ID" value="5238"/>
</dbReference>
<dbReference type="SABIO-RK" id="G4NAP4"/>
<dbReference type="EvolutionaryTrace" id="G4NAP4"/>
<dbReference type="Proteomes" id="UP000009058">
    <property type="component" value="Chromosome 4"/>
</dbReference>
<dbReference type="GO" id="GO:0005576">
    <property type="term" value="C:extracellular region"/>
    <property type="evidence" value="ECO:0007669"/>
    <property type="project" value="UniProtKB-SubCell"/>
</dbReference>
<dbReference type="GO" id="GO:0050584">
    <property type="term" value="F:linoleate 11-lipoxygenase activity"/>
    <property type="evidence" value="ECO:0000314"/>
    <property type="project" value="UniProtKB"/>
</dbReference>
<dbReference type="GO" id="GO:1990136">
    <property type="term" value="F:linoleate 9S-lipoxygenase activity"/>
    <property type="evidence" value="ECO:0000314"/>
    <property type="project" value="UniProtKB"/>
</dbReference>
<dbReference type="GO" id="GO:0046872">
    <property type="term" value="F:metal ion binding"/>
    <property type="evidence" value="ECO:0007669"/>
    <property type="project" value="UniProtKB-KW"/>
</dbReference>
<dbReference type="GO" id="GO:0043651">
    <property type="term" value="P:linoleic acid metabolic process"/>
    <property type="evidence" value="ECO:0000305"/>
    <property type="project" value="UniProtKB"/>
</dbReference>
<dbReference type="GO" id="GO:0034440">
    <property type="term" value="P:lipid oxidation"/>
    <property type="evidence" value="ECO:0007669"/>
    <property type="project" value="InterPro"/>
</dbReference>
<dbReference type="Gene3D" id="3.10.450.60">
    <property type="match status" value="1"/>
</dbReference>
<dbReference type="Gene3D" id="1.20.245.10">
    <property type="entry name" value="Lipoxygenase-1, Domain 5"/>
    <property type="match status" value="1"/>
</dbReference>
<dbReference type="InterPro" id="IPR000907">
    <property type="entry name" value="LipOase"/>
</dbReference>
<dbReference type="InterPro" id="IPR013819">
    <property type="entry name" value="LipOase_C"/>
</dbReference>
<dbReference type="InterPro" id="IPR036226">
    <property type="entry name" value="LipOase_C_sf"/>
</dbReference>
<dbReference type="PANTHER" id="PTHR11771">
    <property type="entry name" value="LIPOXYGENASE"/>
    <property type="match status" value="1"/>
</dbReference>
<dbReference type="Pfam" id="PF00305">
    <property type="entry name" value="Lipoxygenase"/>
    <property type="match status" value="1"/>
</dbReference>
<dbReference type="SUPFAM" id="SSF48484">
    <property type="entry name" value="Lipoxigenase"/>
    <property type="match status" value="1"/>
</dbReference>
<dbReference type="PROSITE" id="PS51393">
    <property type="entry name" value="LIPOXYGENASE_3"/>
    <property type="match status" value="1"/>
</dbReference>
<proteinExistence type="evidence at protein level"/>
<organism>
    <name type="scientific">Pyricularia oryzae (strain 70-15 / ATCC MYA-4617 / FGSC 8958)</name>
    <name type="common">Rice blast fungus</name>
    <name type="synonym">Magnaporthe oryzae</name>
    <dbReference type="NCBI Taxonomy" id="242507"/>
    <lineage>
        <taxon>Eukaryota</taxon>
        <taxon>Fungi</taxon>
        <taxon>Dikarya</taxon>
        <taxon>Ascomycota</taxon>
        <taxon>Pezizomycotina</taxon>
        <taxon>Sordariomycetes</taxon>
        <taxon>Sordariomycetidae</taxon>
        <taxon>Magnaporthales</taxon>
        <taxon>Pyriculariaceae</taxon>
        <taxon>Pyricularia</taxon>
    </lineage>
</organism>
<keyword id="KW-0002">3D-structure</keyword>
<keyword id="KW-0223">Dioxygenase</keyword>
<keyword id="KW-0325">Glycoprotein</keyword>
<keyword id="KW-0464">Manganese</keyword>
<keyword id="KW-0479">Metal-binding</keyword>
<keyword id="KW-0560">Oxidoreductase</keyword>
<keyword id="KW-1185">Reference proteome</keyword>
<keyword id="KW-0964">Secreted</keyword>
<keyword id="KW-0732">Signal</keyword>
<reference key="1">
    <citation type="journal article" date="2015" name="Arch. Biochem. Biophys.">
        <title>Expression and characterization of manganese lipoxygenase of the rice blast fungus reveals prominent sequential lipoxygenation of alpha-linolenic acid.</title>
        <authorList>
            <person name="Wennman A."/>
            <person name="Jerneren F."/>
            <person name="Magnuson A."/>
            <person name="Oliw E.H."/>
        </authorList>
    </citation>
    <scope>NUCLEOTIDE SEQUENCE [MRNA]</scope>
    <scope>REVISION OF GENE MODEL</scope>
    <scope>FUNCTION</scope>
    <scope>CATALYTIC ACTIVITY</scope>
    <source>
        <strain>Guyane 11</strain>
    </source>
</reference>
<reference key="2">
    <citation type="journal article" date="2005" name="Nature">
        <title>The genome sequence of the rice blast fungus Magnaporthe grisea.</title>
        <authorList>
            <person name="Dean R.A."/>
            <person name="Talbot N.J."/>
            <person name="Ebbole D.J."/>
            <person name="Farman M.L."/>
            <person name="Mitchell T.K."/>
            <person name="Orbach M.J."/>
            <person name="Thon M.R."/>
            <person name="Kulkarni R."/>
            <person name="Xu J.-R."/>
            <person name="Pan H."/>
            <person name="Read N.D."/>
            <person name="Lee Y.-H."/>
            <person name="Carbone I."/>
            <person name="Brown D."/>
            <person name="Oh Y.Y."/>
            <person name="Donofrio N."/>
            <person name="Jeong J.S."/>
            <person name="Soanes D.M."/>
            <person name="Djonovic S."/>
            <person name="Kolomiets E."/>
            <person name="Rehmeyer C."/>
            <person name="Li W."/>
            <person name="Harding M."/>
            <person name="Kim S."/>
            <person name="Lebrun M.-H."/>
            <person name="Bohnert H."/>
            <person name="Coughlan S."/>
            <person name="Butler J."/>
            <person name="Calvo S.E."/>
            <person name="Ma L.-J."/>
            <person name="Nicol R."/>
            <person name="Purcell S."/>
            <person name="Nusbaum C."/>
            <person name="Galagan J.E."/>
            <person name="Birren B.W."/>
        </authorList>
    </citation>
    <scope>NUCLEOTIDE SEQUENCE [LARGE SCALE GENOMIC DNA]</scope>
    <source>
        <strain>70-15 / ATCC MYA-4617 / FGSC 8958</strain>
    </source>
</reference>
<reference evidence="9" key="3">
    <citation type="journal article" date="2016" name="J. Biol. Chem.">
        <title>Crystal structure of manganese lipoxygenase of the rice blast fungus Magnaporthe oryzae.</title>
        <authorList>
            <person name="Wennman A."/>
            <person name="Oliw E.H."/>
            <person name="Karkehabadi S."/>
            <person name="Chen Y."/>
        </authorList>
    </citation>
    <scope>X-RAY CRYSTALLOGRAPHY (2.04 ANGSTROMS) OF 17-619 IN COMPLEX WITH MANGANESE</scope>
    <scope>GLYCOSYLATION AT ASN-86; ASN-164 AND ASN-549</scope>
    <scope>CATALYTIC ACTIVITY</scope>
    <scope>MUTAGENESIS OF ARG-539 AND PHE-540</scope>
</reference>
<protein>
    <recommendedName>
        <fullName evidence="7">Manganese lipoxygenase</fullName>
        <shortName evidence="7">MnLOX</shortName>
        <ecNumber evidence="5">1.13.11.-</ecNumber>
        <ecNumber evidence="5">1.13.11.45</ecNumber>
        <ecNumber evidence="5">1.13.11.58</ecNumber>
    </recommendedName>
    <alternativeName>
        <fullName>Manganese 9S/11S-lipoxygenase</fullName>
        <shortName>9S/11S-MnLOX</shortName>
    </alternativeName>
</protein>
<gene>
    <name type="ORF">MGG_08499</name>
</gene>
<name>MNLOX_PYRO7</name>
<feature type="signal peptide" evidence="2">
    <location>
        <begin position="1"/>
        <end position="16"/>
    </location>
</feature>
<feature type="chain" id="PRO_5003466387" description="Manganese lipoxygenase">
    <location>
        <begin position="17"/>
        <end position="619"/>
    </location>
</feature>
<feature type="domain" description="Lipoxygenase" evidence="4">
    <location>
        <begin position="55"/>
        <end position="619"/>
    </location>
</feature>
<feature type="binding site" evidence="6">
    <location>
        <position position="298"/>
    </location>
    <ligand>
        <name>Mn(2+)</name>
        <dbReference type="ChEBI" id="CHEBI:29035"/>
        <note>catalytic</note>
    </ligand>
</feature>
<feature type="binding site" evidence="6">
    <location>
        <position position="303"/>
    </location>
    <ligand>
        <name>Mn(2+)</name>
        <dbReference type="ChEBI" id="CHEBI:29035"/>
        <note>catalytic</note>
    </ligand>
</feature>
<feature type="binding site" evidence="6">
    <location>
        <position position="483"/>
    </location>
    <ligand>
        <name>Mn(2+)</name>
        <dbReference type="ChEBI" id="CHEBI:29035"/>
        <note>catalytic</note>
    </ligand>
</feature>
<feature type="binding site" evidence="6">
    <location>
        <position position="487"/>
    </location>
    <ligand>
        <name>Mn(2+)</name>
        <dbReference type="ChEBI" id="CHEBI:29035"/>
        <note>catalytic</note>
    </ligand>
</feature>
<feature type="binding site" evidence="6">
    <location>
        <position position="619"/>
    </location>
    <ligand>
        <name>Mn(2+)</name>
        <dbReference type="ChEBI" id="CHEBI:29035"/>
        <note>catalytic</note>
    </ligand>
</feature>
<feature type="glycosylation site" description="N-linked (GlcNAc...) asparagine" evidence="3">
    <location>
        <position position="32"/>
    </location>
</feature>
<feature type="glycosylation site" description="N-linked (GlcNAc...) asparagine" evidence="3">
    <location>
        <position position="42"/>
    </location>
</feature>
<feature type="glycosylation site" description="N-linked (GlcNAc...) asparagine" evidence="3">
    <location>
        <position position="62"/>
    </location>
</feature>
<feature type="glycosylation site" description="N-linked (GlcNAc...) asparagine" evidence="6">
    <location>
        <position position="86"/>
    </location>
</feature>
<feature type="glycosylation site" description="N-linked (GlcNAc...) asparagine" evidence="6">
    <location>
        <position position="164"/>
    </location>
</feature>
<feature type="glycosylation site" description="N-linked (GlcNAc...) asparagine" evidence="3">
    <location>
        <position position="229"/>
    </location>
</feature>
<feature type="glycosylation site" description="N-linked (GlcNAc...) asparagine" evidence="3">
    <location>
        <position position="515"/>
    </location>
</feature>
<feature type="glycosylation site" description="N-linked (GlcNAc...) asparagine" evidence="6">
    <location>
        <position position="549"/>
    </location>
</feature>
<feature type="mutagenesis site" description="Reduces catalytic activity towards alpha-linoleate, but retains oxidation activity on 9S-HPOTrE." evidence="6">
    <original>R</original>
    <variation>A</variation>
    <location>
        <position position="539"/>
    </location>
</feature>
<feature type="mutagenesis site" description="Loss of oxidation activity on alpha-linoleate, but retains oxidation activity on 9S-HPOTrE." evidence="6">
    <original>F</original>
    <variation>L</variation>
    <location>
        <position position="540"/>
    </location>
</feature>
<feature type="helix" evidence="10">
    <location>
        <begin position="57"/>
        <end position="59"/>
    </location>
</feature>
<feature type="helix" evidence="10">
    <location>
        <begin position="63"/>
        <end position="76"/>
    </location>
</feature>
<feature type="strand" evidence="10">
    <location>
        <begin position="77"/>
        <end position="80"/>
    </location>
</feature>
<feature type="strand" evidence="10">
    <location>
        <begin position="83"/>
        <end position="88"/>
    </location>
</feature>
<feature type="strand" evidence="10">
    <location>
        <begin position="90"/>
        <end position="92"/>
    </location>
</feature>
<feature type="helix" evidence="10">
    <location>
        <begin position="93"/>
        <end position="131"/>
    </location>
</feature>
<feature type="helix" evidence="10">
    <location>
        <begin position="139"/>
        <end position="144"/>
    </location>
</feature>
<feature type="turn" evidence="10">
    <location>
        <begin position="145"/>
        <end position="147"/>
    </location>
</feature>
<feature type="turn" evidence="10">
    <location>
        <begin position="150"/>
        <end position="152"/>
    </location>
</feature>
<feature type="turn" evidence="10">
    <location>
        <begin position="159"/>
        <end position="166"/>
    </location>
</feature>
<feature type="helix" evidence="10">
    <location>
        <begin position="168"/>
        <end position="173"/>
    </location>
</feature>
<feature type="helix" evidence="10">
    <location>
        <begin position="174"/>
        <end position="176"/>
    </location>
</feature>
<feature type="turn" evidence="10">
    <location>
        <begin position="188"/>
        <end position="190"/>
    </location>
</feature>
<feature type="helix" evidence="10">
    <location>
        <begin position="199"/>
        <end position="206"/>
    </location>
</feature>
<feature type="helix" evidence="10">
    <location>
        <begin position="210"/>
        <end position="215"/>
    </location>
</feature>
<feature type="strand" evidence="10">
    <location>
        <begin position="219"/>
        <end position="223"/>
    </location>
</feature>
<feature type="helix" evidence="10">
    <location>
        <begin position="225"/>
        <end position="227"/>
    </location>
</feature>
<feature type="strand" evidence="10">
    <location>
        <begin position="242"/>
        <end position="247"/>
    </location>
</feature>
<feature type="turn" evidence="10">
    <location>
        <begin position="249"/>
        <end position="251"/>
    </location>
</feature>
<feature type="strand" evidence="10">
    <location>
        <begin position="254"/>
        <end position="260"/>
    </location>
</feature>
<feature type="helix" evidence="10">
    <location>
        <begin position="275"/>
        <end position="277"/>
    </location>
</feature>
<feature type="helix" evidence="10">
    <location>
        <begin position="278"/>
        <end position="300"/>
    </location>
</feature>
<feature type="helix" evidence="10">
    <location>
        <begin position="303"/>
        <end position="316"/>
    </location>
</feature>
<feature type="helix" evidence="10">
    <location>
        <begin position="322"/>
        <end position="330"/>
    </location>
</feature>
<feature type="turn" evidence="10">
    <location>
        <begin position="331"/>
        <end position="333"/>
    </location>
</feature>
<feature type="helix" evidence="10">
    <location>
        <begin position="334"/>
        <end position="336"/>
    </location>
</feature>
<feature type="helix" evidence="10">
    <location>
        <begin position="337"/>
        <end position="343"/>
    </location>
</feature>
<feature type="strand" evidence="10">
    <location>
        <begin position="346"/>
        <end position="349"/>
    </location>
</feature>
<feature type="helix" evidence="10">
    <location>
        <begin position="351"/>
        <end position="355"/>
    </location>
</feature>
<feature type="strand" evidence="10">
    <location>
        <begin position="356"/>
        <end position="358"/>
    </location>
</feature>
<feature type="helix" evidence="10">
    <location>
        <begin position="360"/>
        <end position="374"/>
    </location>
</feature>
<feature type="helix" evidence="10">
    <location>
        <begin position="378"/>
        <end position="380"/>
    </location>
</feature>
<feature type="helix" evidence="10">
    <location>
        <begin position="382"/>
        <end position="388"/>
    </location>
</feature>
<feature type="strand" evidence="10">
    <location>
        <begin position="391"/>
        <end position="393"/>
    </location>
</feature>
<feature type="helix" evidence="10">
    <location>
        <begin position="404"/>
        <end position="427"/>
    </location>
</feature>
<feature type="turn" evidence="10">
    <location>
        <begin position="428"/>
        <end position="430"/>
    </location>
</feature>
<feature type="helix" evidence="10">
    <location>
        <begin position="432"/>
        <end position="436"/>
    </location>
</feature>
<feature type="helix" evidence="10">
    <location>
        <begin position="439"/>
        <end position="449"/>
    </location>
</feature>
<feature type="turn" evidence="10">
    <location>
        <begin position="450"/>
        <end position="452"/>
    </location>
</feature>
<feature type="helix" evidence="10">
    <location>
        <begin position="465"/>
        <end position="480"/>
    </location>
</feature>
<feature type="helix" evidence="10">
    <location>
        <begin position="482"/>
        <end position="486"/>
    </location>
</feature>
<feature type="helix" evidence="10">
    <location>
        <begin position="490"/>
        <end position="493"/>
    </location>
</feature>
<feature type="turn" evidence="10">
    <location>
        <begin position="494"/>
        <end position="496"/>
    </location>
</feature>
<feature type="turn" evidence="10">
    <location>
        <begin position="498"/>
        <end position="500"/>
    </location>
</feature>
<feature type="strand" evidence="10">
    <location>
        <begin position="503"/>
        <end position="507"/>
    </location>
</feature>
<feature type="strand" evidence="10">
    <location>
        <begin position="513"/>
        <end position="516"/>
    </location>
</feature>
<feature type="helix" evidence="10">
    <location>
        <begin position="520"/>
        <end position="522"/>
    </location>
</feature>
<feature type="helix" evidence="10">
    <location>
        <begin position="527"/>
        <end position="538"/>
    </location>
</feature>
<feature type="helix" evidence="10">
    <location>
        <begin position="543"/>
        <end position="545"/>
    </location>
</feature>
<feature type="turn" evidence="10">
    <location>
        <begin position="546"/>
        <end position="549"/>
    </location>
</feature>
<feature type="helix" evidence="10">
    <location>
        <begin position="552"/>
        <end position="554"/>
    </location>
</feature>
<feature type="helix" evidence="10">
    <location>
        <begin position="559"/>
        <end position="564"/>
    </location>
</feature>
<feature type="helix" evidence="10">
    <location>
        <begin position="567"/>
        <end position="588"/>
    </location>
</feature>
<accession>G4NAP4</accession>
<accession>A0A0M4MCV3</accession>
<accession>Q52YI5</accession>
<accession>Q52ZN7</accession>